<gene>
    <name evidence="1" type="primary">ogg</name>
    <name type="ordered locus">Msed_1676</name>
</gene>
<sequence>MLRKVVRDARLRARVLERVEEFRLNKRASERVWFRELVLCILTANSSFIGAFTALQYLGDLILYGSIEEISSALKNAGYRFPNLKARYIIESRSYYGKLREIGRVADRDQIEAREILLEIKGLGMKEASHFLRNMGYLDLAIIDRHILRFFSDYLEDQKISSKSKYFELESVFRSIASALDLPVGVLDLYVWYLKTGKLAK</sequence>
<feature type="chain" id="PRO_1000071834" description="8-oxoguanine DNA glycosylase/AP lyase">
    <location>
        <begin position="1"/>
        <end position="201"/>
    </location>
</feature>
<feature type="active site" evidence="1">
    <location>
        <position position="126"/>
    </location>
</feature>
<feature type="active site" evidence="1">
    <location>
        <position position="144"/>
    </location>
</feature>
<feature type="site" description="Important for guanine/8-oxoguanine distinction" evidence="1">
    <location>
        <position position="201"/>
    </location>
</feature>
<dbReference type="EC" id="3.2.2.-" evidence="1"/>
<dbReference type="EC" id="4.2.99.18" evidence="1"/>
<dbReference type="EMBL" id="CP000682">
    <property type="protein sequence ID" value="ABP95831.1"/>
    <property type="molecule type" value="Genomic_DNA"/>
</dbReference>
<dbReference type="RefSeq" id="WP_012021618.1">
    <property type="nucleotide sequence ID" value="NC_009440.1"/>
</dbReference>
<dbReference type="SMR" id="A4YHC9"/>
<dbReference type="STRING" id="399549.Msed_1676"/>
<dbReference type="GeneID" id="91756188"/>
<dbReference type="KEGG" id="mse:Msed_1676"/>
<dbReference type="eggNOG" id="arCOG04357">
    <property type="taxonomic scope" value="Archaea"/>
</dbReference>
<dbReference type="HOGENOM" id="CLU_104937_0_0_2"/>
<dbReference type="Proteomes" id="UP000000242">
    <property type="component" value="Chromosome"/>
</dbReference>
<dbReference type="GO" id="GO:0140078">
    <property type="term" value="F:class I DNA-(apurinic or apyrimidinic site) endonuclease activity"/>
    <property type="evidence" value="ECO:0007669"/>
    <property type="project" value="UniProtKB-EC"/>
</dbReference>
<dbReference type="GO" id="GO:0016799">
    <property type="term" value="F:hydrolase activity, hydrolyzing N-glycosyl compounds"/>
    <property type="evidence" value="ECO:0007669"/>
    <property type="project" value="UniProtKB-UniRule"/>
</dbReference>
<dbReference type="GO" id="GO:0006284">
    <property type="term" value="P:base-excision repair"/>
    <property type="evidence" value="ECO:0007669"/>
    <property type="project" value="UniProtKB-UniRule"/>
</dbReference>
<dbReference type="CDD" id="cd00056">
    <property type="entry name" value="ENDO3c"/>
    <property type="match status" value="1"/>
</dbReference>
<dbReference type="Gene3D" id="1.10.1670.10">
    <property type="entry name" value="Helix-hairpin-Helix base-excision DNA repair enzymes (C-terminal)"/>
    <property type="match status" value="1"/>
</dbReference>
<dbReference type="Gene3D" id="1.10.340.30">
    <property type="entry name" value="Hypothetical protein, domain 2"/>
    <property type="match status" value="1"/>
</dbReference>
<dbReference type="HAMAP" id="MF_00241">
    <property type="entry name" value="Ogg"/>
    <property type="match status" value="1"/>
</dbReference>
<dbReference type="InterPro" id="IPR012092">
    <property type="entry name" value="DNA_glyclase/AP_lyase_Ogg"/>
</dbReference>
<dbReference type="InterPro" id="IPR011257">
    <property type="entry name" value="DNA_glycosylase"/>
</dbReference>
<dbReference type="InterPro" id="IPR003265">
    <property type="entry name" value="HhH-GPD_domain"/>
</dbReference>
<dbReference type="InterPro" id="IPR023170">
    <property type="entry name" value="HhH_base_excis_C"/>
</dbReference>
<dbReference type="NCBIfam" id="NF002305">
    <property type="entry name" value="PRK01229.1"/>
    <property type="match status" value="1"/>
</dbReference>
<dbReference type="Pfam" id="PF22175">
    <property type="entry name" value="Ogg-HhH"/>
    <property type="match status" value="1"/>
</dbReference>
<dbReference type="PIRSF" id="PIRSF005954">
    <property type="entry name" value="Thrmst_ogg"/>
    <property type="match status" value="1"/>
</dbReference>
<dbReference type="SMART" id="SM00478">
    <property type="entry name" value="ENDO3c"/>
    <property type="match status" value="1"/>
</dbReference>
<dbReference type="SUPFAM" id="SSF48150">
    <property type="entry name" value="DNA-glycosylase"/>
    <property type="match status" value="1"/>
</dbReference>
<accession>A4YHC9</accession>
<proteinExistence type="inferred from homology"/>
<name>OGG1_METS5</name>
<organism>
    <name type="scientific">Metallosphaera sedula (strain ATCC 51363 / DSM 5348 / JCM 9185 / NBRC 15509 / TH2)</name>
    <dbReference type="NCBI Taxonomy" id="399549"/>
    <lineage>
        <taxon>Archaea</taxon>
        <taxon>Thermoproteota</taxon>
        <taxon>Thermoprotei</taxon>
        <taxon>Sulfolobales</taxon>
        <taxon>Sulfolobaceae</taxon>
        <taxon>Metallosphaera</taxon>
    </lineage>
</organism>
<protein>
    <recommendedName>
        <fullName evidence="1">8-oxoguanine DNA glycosylase/AP lyase</fullName>
    </recommendedName>
    <domain>
        <recommendedName>
            <fullName evidence="1">8-oxoguanine DNA glycosylase</fullName>
            <shortName evidence="1">8-oxoG DNA glycosylase</shortName>
            <ecNumber evidence="1">3.2.2.-</ecNumber>
        </recommendedName>
    </domain>
    <domain>
        <recommendedName>
            <fullName evidence="1">DNA-(apurinic or apyrimidinic site) lyase</fullName>
            <shortName evidence="1">AP lyase</shortName>
            <ecNumber evidence="1">4.2.99.18</ecNumber>
        </recommendedName>
    </domain>
</protein>
<comment type="function">
    <text evidence="1">Catalyzes the excision of an oxidatively damaged form of guanine (7,8-dihydro-8-oxoguanine = 8-oxoG) from DNA. Also cleaves the DNA backbone at apurinic/apyrimidinic sites (AP sites).</text>
</comment>
<comment type="catalytic activity">
    <reaction evidence="1">
        <text>2'-deoxyribonucleotide-(2'-deoxyribose 5'-phosphate)-2'-deoxyribonucleotide-DNA = a 3'-end 2'-deoxyribonucleotide-(2,3-dehydro-2,3-deoxyribose 5'-phosphate)-DNA + a 5'-end 5'-phospho-2'-deoxyribonucleoside-DNA + H(+)</text>
        <dbReference type="Rhea" id="RHEA:66592"/>
        <dbReference type="Rhea" id="RHEA-COMP:13180"/>
        <dbReference type="Rhea" id="RHEA-COMP:16897"/>
        <dbReference type="Rhea" id="RHEA-COMP:17067"/>
        <dbReference type="ChEBI" id="CHEBI:15378"/>
        <dbReference type="ChEBI" id="CHEBI:136412"/>
        <dbReference type="ChEBI" id="CHEBI:157695"/>
        <dbReference type="ChEBI" id="CHEBI:167181"/>
        <dbReference type="EC" id="4.2.99.18"/>
    </reaction>
</comment>
<comment type="similarity">
    <text evidence="1">Belongs to the type-2 OGG1 family.</text>
</comment>
<reference key="1">
    <citation type="journal article" date="2008" name="Appl. Environ. Microbiol.">
        <title>The genome sequence of the metal-mobilizing, extremely thermoacidophilic archaeon Metallosphaera sedula provides insights into bioleaching-associated metabolism.</title>
        <authorList>
            <person name="Auernik K.S."/>
            <person name="Maezato Y."/>
            <person name="Blum P.H."/>
            <person name="Kelly R.M."/>
        </authorList>
    </citation>
    <scope>NUCLEOTIDE SEQUENCE [LARGE SCALE GENOMIC DNA]</scope>
    <source>
        <strain>ATCC 51363 / DSM 5348 / JCM 9185 / NBRC 15509 / TH2</strain>
    </source>
</reference>
<evidence type="ECO:0000255" key="1">
    <source>
        <dbReference type="HAMAP-Rule" id="MF_00241"/>
    </source>
</evidence>
<keyword id="KW-0227">DNA damage</keyword>
<keyword id="KW-0234">DNA repair</keyword>
<keyword id="KW-0326">Glycosidase</keyword>
<keyword id="KW-0378">Hydrolase</keyword>
<keyword id="KW-0456">Lyase</keyword>
<keyword id="KW-0511">Multifunctional enzyme</keyword>
<keyword id="KW-1185">Reference proteome</keyword>